<protein>
    <recommendedName>
        <fullName>Superoxide dismutase [Mn/Fe] 2</fullName>
        <ecNumber evidence="2">1.15.1.1</ecNumber>
    </recommendedName>
</protein>
<evidence type="ECO:0000250" key="1"/>
<evidence type="ECO:0000250" key="2">
    <source>
        <dbReference type="UniProtKB" id="P80293"/>
    </source>
</evidence>
<evidence type="ECO:0000305" key="3"/>
<keyword id="KW-0408">Iron</keyword>
<keyword id="KW-0464">Manganese</keyword>
<keyword id="KW-0479">Metal-binding</keyword>
<keyword id="KW-0560">Oxidoreductase</keyword>
<keyword id="KW-0346">Stress response</keyword>
<organism>
    <name type="scientific">Staphylococcus aureus (strain MSSA476)</name>
    <dbReference type="NCBI Taxonomy" id="282459"/>
    <lineage>
        <taxon>Bacteria</taxon>
        <taxon>Bacillati</taxon>
        <taxon>Bacillota</taxon>
        <taxon>Bacilli</taxon>
        <taxon>Bacillales</taxon>
        <taxon>Staphylococcaceae</taxon>
        <taxon>Staphylococcus</taxon>
    </lineage>
</organism>
<accession>Q6GCZ1</accession>
<name>SODM2_STAAS</name>
<comment type="function">
    <text evidence="2">Destroys superoxide anion radicals which are normally produced within the cells and which are toxic to biological systems. Catalyzes the dismutation of superoxide anion radicals into O2 and H2O2 by successive reduction and oxidation of the transition metal ion at the active site.</text>
</comment>
<comment type="catalytic activity">
    <reaction evidence="2">
        <text>2 superoxide + 2 H(+) = H2O2 + O2</text>
        <dbReference type="Rhea" id="RHEA:20696"/>
        <dbReference type="ChEBI" id="CHEBI:15378"/>
        <dbReference type="ChEBI" id="CHEBI:15379"/>
        <dbReference type="ChEBI" id="CHEBI:16240"/>
        <dbReference type="ChEBI" id="CHEBI:18421"/>
        <dbReference type="EC" id="1.15.1.1"/>
    </reaction>
    <physiologicalReaction direction="left-to-right" evidence="2">
        <dbReference type="Rhea" id="RHEA:20697"/>
    </physiologicalReaction>
</comment>
<comment type="cofactor">
    <cofactor evidence="2">
        <name>Mn(2+)</name>
        <dbReference type="ChEBI" id="CHEBI:29035"/>
    </cofactor>
    <cofactor evidence="2">
        <name>Fe(3+)</name>
        <dbReference type="ChEBI" id="CHEBI:29034"/>
    </cofactor>
    <text evidence="2">Binds 1 Mn(2+) or Fe(3+) ion per subunit.</text>
</comment>
<comment type="subunit">
    <text evidence="1">Homodimer. Can also form a heterodimer with SodA (By similarity).</text>
</comment>
<comment type="similarity">
    <text evidence="3">Belongs to the iron/manganese superoxide dismutase family.</text>
</comment>
<feature type="chain" id="PRO_0000160083" description="Superoxide dismutase [Mn/Fe] 2">
    <location>
        <begin position="1"/>
        <end position="199"/>
    </location>
</feature>
<feature type="binding site" evidence="2">
    <location>
        <position position="27"/>
    </location>
    <ligand>
        <name>Fe(3+)</name>
        <dbReference type="ChEBI" id="CHEBI:29034"/>
    </ligand>
</feature>
<feature type="binding site" evidence="2">
    <location>
        <position position="27"/>
    </location>
    <ligand>
        <name>Mn(2+)</name>
        <dbReference type="ChEBI" id="CHEBI:29035"/>
    </ligand>
</feature>
<feature type="binding site" evidence="2">
    <location>
        <position position="81"/>
    </location>
    <ligand>
        <name>Fe(3+)</name>
        <dbReference type="ChEBI" id="CHEBI:29034"/>
    </ligand>
</feature>
<feature type="binding site" evidence="2">
    <location>
        <position position="81"/>
    </location>
    <ligand>
        <name>Mn(2+)</name>
        <dbReference type="ChEBI" id="CHEBI:29035"/>
    </ligand>
</feature>
<feature type="binding site" evidence="2">
    <location>
        <position position="161"/>
    </location>
    <ligand>
        <name>Fe(3+)</name>
        <dbReference type="ChEBI" id="CHEBI:29034"/>
    </ligand>
</feature>
<feature type="binding site" evidence="2">
    <location>
        <position position="161"/>
    </location>
    <ligand>
        <name>Mn(2+)</name>
        <dbReference type="ChEBI" id="CHEBI:29035"/>
    </ligand>
</feature>
<feature type="binding site" evidence="2">
    <location>
        <position position="165"/>
    </location>
    <ligand>
        <name>Fe(3+)</name>
        <dbReference type="ChEBI" id="CHEBI:29034"/>
    </ligand>
</feature>
<feature type="binding site" evidence="2">
    <location>
        <position position="165"/>
    </location>
    <ligand>
        <name>Mn(2+)</name>
        <dbReference type="ChEBI" id="CHEBI:29035"/>
    </ligand>
</feature>
<reference key="1">
    <citation type="journal article" date="2004" name="Proc. Natl. Acad. Sci. U.S.A.">
        <title>Complete genomes of two clinical Staphylococcus aureus strains: evidence for the rapid evolution of virulence and drug resistance.</title>
        <authorList>
            <person name="Holden M.T.G."/>
            <person name="Feil E.J."/>
            <person name="Lindsay J.A."/>
            <person name="Peacock S.J."/>
            <person name="Day N.P.J."/>
            <person name="Enright M.C."/>
            <person name="Foster T.J."/>
            <person name="Moore C.E."/>
            <person name="Hurst L."/>
            <person name="Atkin R."/>
            <person name="Barron A."/>
            <person name="Bason N."/>
            <person name="Bentley S.D."/>
            <person name="Chillingworth C."/>
            <person name="Chillingworth T."/>
            <person name="Churcher C."/>
            <person name="Clark L."/>
            <person name="Corton C."/>
            <person name="Cronin A."/>
            <person name="Doggett J."/>
            <person name="Dowd L."/>
            <person name="Feltwell T."/>
            <person name="Hance Z."/>
            <person name="Harris B."/>
            <person name="Hauser H."/>
            <person name="Holroyd S."/>
            <person name="Jagels K."/>
            <person name="James K.D."/>
            <person name="Lennard N."/>
            <person name="Line A."/>
            <person name="Mayes R."/>
            <person name="Moule S."/>
            <person name="Mungall K."/>
            <person name="Ormond D."/>
            <person name="Quail M.A."/>
            <person name="Rabbinowitsch E."/>
            <person name="Rutherford K.M."/>
            <person name="Sanders M."/>
            <person name="Sharp S."/>
            <person name="Simmonds M."/>
            <person name="Stevens K."/>
            <person name="Whitehead S."/>
            <person name="Barrell B.G."/>
            <person name="Spratt B.G."/>
            <person name="Parkhill J."/>
        </authorList>
    </citation>
    <scope>NUCLEOTIDE SEQUENCE [LARGE SCALE GENOMIC DNA]</scope>
    <source>
        <strain>MSSA476</strain>
    </source>
</reference>
<dbReference type="EC" id="1.15.1.1" evidence="2"/>
<dbReference type="EMBL" id="BX571857">
    <property type="protein sequence ID" value="CAG41875.1"/>
    <property type="molecule type" value="Genomic_DNA"/>
</dbReference>
<dbReference type="RefSeq" id="WP_000874681.1">
    <property type="nucleotide sequence ID" value="NC_002953.3"/>
</dbReference>
<dbReference type="SMR" id="Q6GCZ1"/>
<dbReference type="KEGG" id="sas:SAS0107"/>
<dbReference type="HOGENOM" id="CLU_031625_0_0_9"/>
<dbReference type="GO" id="GO:0005737">
    <property type="term" value="C:cytoplasm"/>
    <property type="evidence" value="ECO:0007669"/>
    <property type="project" value="TreeGrafter"/>
</dbReference>
<dbReference type="GO" id="GO:0046872">
    <property type="term" value="F:metal ion binding"/>
    <property type="evidence" value="ECO:0007669"/>
    <property type="project" value="UniProtKB-KW"/>
</dbReference>
<dbReference type="GO" id="GO:0004784">
    <property type="term" value="F:superoxide dismutase activity"/>
    <property type="evidence" value="ECO:0007669"/>
    <property type="project" value="UniProtKB-EC"/>
</dbReference>
<dbReference type="FunFam" id="1.10.287.990:FF:000001">
    <property type="entry name" value="Superoxide dismutase"/>
    <property type="match status" value="1"/>
</dbReference>
<dbReference type="FunFam" id="3.55.40.20:FF:000001">
    <property type="entry name" value="Superoxide dismutase"/>
    <property type="match status" value="1"/>
</dbReference>
<dbReference type="Gene3D" id="1.10.287.990">
    <property type="entry name" value="Fe,Mn superoxide dismutase (SOD) domain"/>
    <property type="match status" value="1"/>
</dbReference>
<dbReference type="Gene3D" id="3.55.40.20">
    <property type="entry name" value="Iron/manganese superoxide dismutase, C-terminal domain"/>
    <property type="match status" value="1"/>
</dbReference>
<dbReference type="InterPro" id="IPR001189">
    <property type="entry name" value="Mn/Fe_SOD"/>
</dbReference>
<dbReference type="InterPro" id="IPR019833">
    <property type="entry name" value="Mn/Fe_SOD_BS"/>
</dbReference>
<dbReference type="InterPro" id="IPR019832">
    <property type="entry name" value="Mn/Fe_SOD_C"/>
</dbReference>
<dbReference type="InterPro" id="IPR019831">
    <property type="entry name" value="Mn/Fe_SOD_N"/>
</dbReference>
<dbReference type="InterPro" id="IPR036324">
    <property type="entry name" value="Mn/Fe_SOD_N_sf"/>
</dbReference>
<dbReference type="InterPro" id="IPR036314">
    <property type="entry name" value="SOD_C_sf"/>
</dbReference>
<dbReference type="PANTHER" id="PTHR43595">
    <property type="entry name" value="37S RIBOSOMAL PROTEIN S26, MITOCHONDRIAL"/>
    <property type="match status" value="1"/>
</dbReference>
<dbReference type="PANTHER" id="PTHR43595:SF2">
    <property type="entry name" value="SMALL RIBOSOMAL SUBUNIT PROTEIN MS42"/>
    <property type="match status" value="1"/>
</dbReference>
<dbReference type="Pfam" id="PF02777">
    <property type="entry name" value="Sod_Fe_C"/>
    <property type="match status" value="1"/>
</dbReference>
<dbReference type="Pfam" id="PF00081">
    <property type="entry name" value="Sod_Fe_N"/>
    <property type="match status" value="1"/>
</dbReference>
<dbReference type="PIRSF" id="PIRSF000349">
    <property type="entry name" value="SODismutase"/>
    <property type="match status" value="1"/>
</dbReference>
<dbReference type="PRINTS" id="PR01703">
    <property type="entry name" value="MNSODISMTASE"/>
</dbReference>
<dbReference type="SUPFAM" id="SSF54719">
    <property type="entry name" value="Fe,Mn superoxide dismutase (SOD), C-terminal domain"/>
    <property type="match status" value="1"/>
</dbReference>
<dbReference type="SUPFAM" id="SSF46609">
    <property type="entry name" value="Fe,Mn superoxide dismutase (SOD), N-terminal domain"/>
    <property type="match status" value="1"/>
</dbReference>
<dbReference type="PROSITE" id="PS00088">
    <property type="entry name" value="SOD_MN"/>
    <property type="match status" value="1"/>
</dbReference>
<gene>
    <name type="primary">sodM</name>
    <name type="ordered locus">SAS0107</name>
</gene>
<proteinExistence type="inferred from homology"/>
<sequence length="199" mass="23041">MAFKLPNLPYAYDALEPYIDQRTMEFHHDKHHNTYVTKLNATVEGTELEHQSLADMIANLDKVPEAMRMSVRNNGGGHFNHSLFWEILSPNSEEKGGVIDDIKAQWGTLDEFKNEFANKATTLFGSGWTWLVVNDGKLEIVTTPNQDNPLTEGKTPILLFDVWEHAYYLKYQNKRPDYMTAFWNIVNWKKVDELYQAAK</sequence>